<name>SURE_BRUME</name>
<reference key="1">
    <citation type="journal article" date="2002" name="Proc. Natl. Acad. Sci. U.S.A.">
        <title>The genome sequence of the facultative intracellular pathogen Brucella melitensis.</title>
        <authorList>
            <person name="DelVecchio V.G."/>
            <person name="Kapatral V."/>
            <person name="Redkar R.J."/>
            <person name="Patra G."/>
            <person name="Mujer C."/>
            <person name="Los T."/>
            <person name="Ivanova N."/>
            <person name="Anderson I."/>
            <person name="Bhattacharyya A."/>
            <person name="Lykidis A."/>
            <person name="Reznik G."/>
            <person name="Jablonski L."/>
            <person name="Larsen N."/>
            <person name="D'Souza M."/>
            <person name="Bernal A."/>
            <person name="Mazur M."/>
            <person name="Goltsman E."/>
            <person name="Selkov E."/>
            <person name="Elzer P.H."/>
            <person name="Hagius S."/>
            <person name="O'Callaghan D."/>
            <person name="Letesson J.-J."/>
            <person name="Haselkorn R."/>
            <person name="Kyrpides N.C."/>
            <person name="Overbeek R."/>
        </authorList>
    </citation>
    <scope>NUCLEOTIDE SEQUENCE [LARGE SCALE GENOMIC DNA]</scope>
    <source>
        <strain>ATCC 23456 / CCUG 17765 / NCTC 10094 / 16M</strain>
    </source>
</reference>
<comment type="function">
    <text evidence="1">Nucleotidase that shows phosphatase activity on nucleoside 5'-monophosphates.</text>
</comment>
<comment type="catalytic activity">
    <reaction evidence="1">
        <text>a ribonucleoside 5'-phosphate + H2O = a ribonucleoside + phosphate</text>
        <dbReference type="Rhea" id="RHEA:12484"/>
        <dbReference type="ChEBI" id="CHEBI:15377"/>
        <dbReference type="ChEBI" id="CHEBI:18254"/>
        <dbReference type="ChEBI" id="CHEBI:43474"/>
        <dbReference type="ChEBI" id="CHEBI:58043"/>
        <dbReference type="EC" id="3.1.3.5"/>
    </reaction>
</comment>
<comment type="cofactor">
    <cofactor evidence="1">
        <name>a divalent metal cation</name>
        <dbReference type="ChEBI" id="CHEBI:60240"/>
    </cofactor>
    <text evidence="1">Binds 1 divalent metal cation per subunit.</text>
</comment>
<comment type="subcellular location">
    <subcellularLocation>
        <location evidence="1">Cytoplasm</location>
    </subcellularLocation>
</comment>
<comment type="similarity">
    <text evidence="1">Belongs to the SurE nucleotidase family.</text>
</comment>
<comment type="sequence caution" evidence="2">
    <conflict type="erroneous initiation">
        <sequence resource="EMBL-CDS" id="AAL52262"/>
    </conflict>
</comment>
<accession>P66879</accession>
<accession>Q8YGS7</accession>
<protein>
    <recommendedName>
        <fullName evidence="1">5'-nucleotidase SurE</fullName>
        <ecNumber evidence="1">3.1.3.5</ecNumber>
    </recommendedName>
    <alternativeName>
        <fullName evidence="1">Nucleoside 5'-monophosphate phosphohydrolase</fullName>
    </alternativeName>
</protein>
<organism>
    <name type="scientific">Brucella melitensis biotype 1 (strain ATCC 23456 / CCUG 17765 / NCTC 10094 / 16M)</name>
    <dbReference type="NCBI Taxonomy" id="224914"/>
    <lineage>
        <taxon>Bacteria</taxon>
        <taxon>Pseudomonadati</taxon>
        <taxon>Pseudomonadota</taxon>
        <taxon>Alphaproteobacteria</taxon>
        <taxon>Hyphomicrobiales</taxon>
        <taxon>Brucellaceae</taxon>
        <taxon>Brucella/Ochrobactrum group</taxon>
        <taxon>Brucella</taxon>
    </lineage>
</organism>
<gene>
    <name evidence="1" type="primary">surE</name>
    <name type="ordered locus">BMEI1081</name>
</gene>
<feature type="chain" id="PRO_0000111794" description="5'-nucleotidase SurE">
    <location>
        <begin position="1"/>
        <end position="255"/>
    </location>
</feature>
<feature type="binding site" evidence="1">
    <location>
        <position position="8"/>
    </location>
    <ligand>
        <name>a divalent metal cation</name>
        <dbReference type="ChEBI" id="CHEBI:60240"/>
    </ligand>
</feature>
<feature type="binding site" evidence="1">
    <location>
        <position position="9"/>
    </location>
    <ligand>
        <name>a divalent metal cation</name>
        <dbReference type="ChEBI" id="CHEBI:60240"/>
    </ligand>
</feature>
<feature type="binding site" evidence="1">
    <location>
        <position position="40"/>
    </location>
    <ligand>
        <name>a divalent metal cation</name>
        <dbReference type="ChEBI" id="CHEBI:60240"/>
    </ligand>
</feature>
<feature type="binding site" evidence="1">
    <location>
        <position position="92"/>
    </location>
    <ligand>
        <name>a divalent metal cation</name>
        <dbReference type="ChEBI" id="CHEBI:60240"/>
    </ligand>
</feature>
<proteinExistence type="inferred from homology"/>
<dbReference type="EC" id="3.1.3.5" evidence="1"/>
<dbReference type="EMBL" id="AE008917">
    <property type="protein sequence ID" value="AAL52262.1"/>
    <property type="status" value="ALT_INIT"/>
    <property type="molecule type" value="Genomic_DNA"/>
</dbReference>
<dbReference type="PIR" id="AC3387">
    <property type="entry name" value="AC3387"/>
</dbReference>
<dbReference type="RefSeq" id="WP_004683703.1">
    <property type="nucleotide sequence ID" value="NZ_GG703778.1"/>
</dbReference>
<dbReference type="SMR" id="P66879"/>
<dbReference type="GeneID" id="97533818"/>
<dbReference type="KEGG" id="bme:BMEI1081"/>
<dbReference type="KEGG" id="bmel:DK63_332"/>
<dbReference type="PATRIC" id="fig|224914.52.peg.344"/>
<dbReference type="eggNOG" id="COG0496">
    <property type="taxonomic scope" value="Bacteria"/>
</dbReference>
<dbReference type="PhylomeDB" id="P66879"/>
<dbReference type="Proteomes" id="UP000000419">
    <property type="component" value="Chromosome I"/>
</dbReference>
<dbReference type="GO" id="GO:0005737">
    <property type="term" value="C:cytoplasm"/>
    <property type="evidence" value="ECO:0007669"/>
    <property type="project" value="UniProtKB-SubCell"/>
</dbReference>
<dbReference type="GO" id="GO:0008254">
    <property type="term" value="F:3'-nucleotidase activity"/>
    <property type="evidence" value="ECO:0007669"/>
    <property type="project" value="TreeGrafter"/>
</dbReference>
<dbReference type="GO" id="GO:0008253">
    <property type="term" value="F:5'-nucleotidase activity"/>
    <property type="evidence" value="ECO:0007669"/>
    <property type="project" value="UniProtKB-UniRule"/>
</dbReference>
<dbReference type="GO" id="GO:0004309">
    <property type="term" value="F:exopolyphosphatase activity"/>
    <property type="evidence" value="ECO:0007669"/>
    <property type="project" value="TreeGrafter"/>
</dbReference>
<dbReference type="GO" id="GO:0046872">
    <property type="term" value="F:metal ion binding"/>
    <property type="evidence" value="ECO:0007669"/>
    <property type="project" value="UniProtKB-UniRule"/>
</dbReference>
<dbReference type="GO" id="GO:0000166">
    <property type="term" value="F:nucleotide binding"/>
    <property type="evidence" value="ECO:0007669"/>
    <property type="project" value="UniProtKB-KW"/>
</dbReference>
<dbReference type="FunFam" id="3.40.1210.10:FF:000001">
    <property type="entry name" value="5'/3'-nucleotidase SurE"/>
    <property type="match status" value="1"/>
</dbReference>
<dbReference type="Gene3D" id="3.40.1210.10">
    <property type="entry name" value="Survival protein SurE-like phosphatase/nucleotidase"/>
    <property type="match status" value="1"/>
</dbReference>
<dbReference type="HAMAP" id="MF_00060">
    <property type="entry name" value="SurE"/>
    <property type="match status" value="1"/>
</dbReference>
<dbReference type="InterPro" id="IPR030048">
    <property type="entry name" value="SurE"/>
</dbReference>
<dbReference type="InterPro" id="IPR002828">
    <property type="entry name" value="SurE-like_Pase/nucleotidase"/>
</dbReference>
<dbReference type="InterPro" id="IPR036523">
    <property type="entry name" value="SurE-like_sf"/>
</dbReference>
<dbReference type="NCBIfam" id="NF001490">
    <property type="entry name" value="PRK00346.1-4"/>
    <property type="match status" value="1"/>
</dbReference>
<dbReference type="NCBIfam" id="TIGR00087">
    <property type="entry name" value="surE"/>
    <property type="match status" value="1"/>
</dbReference>
<dbReference type="PANTHER" id="PTHR30457">
    <property type="entry name" value="5'-NUCLEOTIDASE SURE"/>
    <property type="match status" value="1"/>
</dbReference>
<dbReference type="PANTHER" id="PTHR30457:SF12">
    <property type="entry name" value="5'_3'-NUCLEOTIDASE SURE"/>
    <property type="match status" value="1"/>
</dbReference>
<dbReference type="Pfam" id="PF01975">
    <property type="entry name" value="SurE"/>
    <property type="match status" value="1"/>
</dbReference>
<dbReference type="SUPFAM" id="SSF64167">
    <property type="entry name" value="SurE-like"/>
    <property type="match status" value="1"/>
</dbReference>
<evidence type="ECO:0000255" key="1">
    <source>
        <dbReference type="HAMAP-Rule" id="MF_00060"/>
    </source>
</evidence>
<evidence type="ECO:0000305" key="2"/>
<sequence>MRILLTNDDGIHAEGLAVLERIARKLSDDVWVVAPETDQSGLAHSLTLSEPLRLRQIDARHFALRGTPTDCVIMGVRHVLPGAPDLVLSGVNSGANMADDVTYSGTVAGAMEGTLLGVRAIALSQEYEYAGDRRIVPWETAEAHAPELIGRLMEAGWPEGVLLNLNFPNCAPEEVKGVRVTAQGKLSHDARLDERRDGRGFPYFWLHFGRGKAPVADDSDIAAIRSGCISVTPLHLDLTAHKVRAELGAALGVEA</sequence>
<keyword id="KW-0963">Cytoplasm</keyword>
<keyword id="KW-0378">Hydrolase</keyword>
<keyword id="KW-0479">Metal-binding</keyword>
<keyword id="KW-0547">Nucleotide-binding</keyword>